<evidence type="ECO:0000269" key="1">
    <source>
    </source>
</evidence>
<evidence type="ECO:0000303" key="2">
    <source>
    </source>
</evidence>
<evidence type="ECO:0000305" key="3"/>
<proteinExistence type="evidence at protein level"/>
<accession>P82437</accession>
<protein>
    <recommendedName>
        <fullName>26 kDa cell wall protein</fullName>
    </recommendedName>
</protein>
<organism>
    <name type="scientific">Nicotiana tabacum</name>
    <name type="common">Common tobacco</name>
    <dbReference type="NCBI Taxonomy" id="4097"/>
    <lineage>
        <taxon>Eukaryota</taxon>
        <taxon>Viridiplantae</taxon>
        <taxon>Streptophyta</taxon>
        <taxon>Embryophyta</taxon>
        <taxon>Tracheophyta</taxon>
        <taxon>Spermatophyta</taxon>
        <taxon>Magnoliopsida</taxon>
        <taxon>eudicotyledons</taxon>
        <taxon>Gunneridae</taxon>
        <taxon>Pentapetalae</taxon>
        <taxon>asterids</taxon>
        <taxon>lamiids</taxon>
        <taxon>Solanales</taxon>
        <taxon>Solanaceae</taxon>
        <taxon>Nicotianoideae</taxon>
        <taxon>Nicotianeae</taxon>
        <taxon>Nicotiana</taxon>
    </lineage>
</organism>
<dbReference type="PaxDb" id="4097-P82437"/>
<dbReference type="Proteomes" id="UP000084051">
    <property type="component" value="Unplaced"/>
</dbReference>
<dbReference type="GO" id="GO:0005576">
    <property type="term" value="C:extracellular region"/>
    <property type="evidence" value="ECO:0007669"/>
    <property type="project" value="UniProtKB-KW"/>
</dbReference>
<feature type="chain" id="PRO_0000079716" description="26 kDa cell wall protein">
    <location>
        <begin position="1"/>
        <end position="12" status="greater than"/>
    </location>
</feature>
<feature type="non-terminal residue" evidence="2">
    <location>
        <position position="12"/>
    </location>
</feature>
<name>CWP29_TOBAC</name>
<keyword id="KW-0134">Cell wall</keyword>
<keyword id="KW-0903">Direct protein sequencing</keyword>
<keyword id="KW-1185">Reference proteome</keyword>
<keyword id="KW-0964">Secreted</keyword>
<reference evidence="3" key="1">
    <citation type="journal article" date="2001" name="Planta">
        <title>Proteomic analysis reveals a novel set of cell wall proteins in a transformed tobacco cell culture that synthesises secondary walls as determined by biochemical and morphological parameters.</title>
        <authorList>
            <person name="Blee K.A."/>
            <person name="Wheatley E.R."/>
            <person name="Bonham V.A."/>
            <person name="Mitchell G.P."/>
            <person name="Robertson D."/>
            <person name="Slabas A.R."/>
            <person name="Burrell M.M."/>
            <person name="Wojtaszek P."/>
            <person name="Bolwell G.P."/>
        </authorList>
    </citation>
    <scope>PROTEIN SEQUENCE</scope>
    <scope>SUBCELLULAR LOCATION</scope>
    <source>
        <strain evidence="1">cv. Petit Havana</strain>
    </source>
</reference>
<sequence>MYMXTXNDVXTF</sequence>
<comment type="subcellular location">
    <subcellularLocation>
        <location evidence="1">Secreted</location>
        <location evidence="1">Cell wall</location>
    </subcellularLocation>
</comment>